<evidence type="ECO:0000250" key="1"/>
<evidence type="ECO:0000255" key="2"/>
<evidence type="ECO:0000255" key="3">
    <source>
        <dbReference type="PROSITE-ProRule" id="PRU10035"/>
    </source>
</evidence>
<evidence type="ECO:0000255" key="4">
    <source>
        <dbReference type="PROSITE-ProRule" id="PRU10036"/>
    </source>
</evidence>
<evidence type="ECO:0000269" key="5">
    <source>
    </source>
</evidence>
<evidence type="ECO:0000305" key="6"/>
<feature type="signal peptide" evidence="1">
    <location>
        <begin position="1"/>
        <end position="21"/>
    </location>
</feature>
<feature type="propeptide" id="PRO_0000422879" evidence="5">
    <location>
        <begin position="22"/>
        <end position="27"/>
    </location>
</feature>
<feature type="chain" id="PRO_0000419210" description="Basic phospholipase A2">
    <location>
        <begin position="28"/>
        <end position="146"/>
    </location>
</feature>
<feature type="active site" evidence="1">
    <location>
        <position position="73"/>
    </location>
</feature>
<feature type="active site" evidence="1">
    <location>
        <position position="121"/>
    </location>
</feature>
<feature type="binding site" evidence="1">
    <location>
        <position position="53"/>
    </location>
    <ligand>
        <name>Ca(2+)</name>
        <dbReference type="ChEBI" id="CHEBI:29108"/>
    </ligand>
</feature>
<feature type="binding site" evidence="1">
    <location>
        <position position="55"/>
    </location>
    <ligand>
        <name>Ca(2+)</name>
        <dbReference type="ChEBI" id="CHEBI:29108"/>
    </ligand>
</feature>
<feature type="binding site" evidence="1">
    <location>
        <position position="57"/>
    </location>
    <ligand>
        <name>Ca(2+)</name>
        <dbReference type="ChEBI" id="CHEBI:29108"/>
    </ligand>
</feature>
<feature type="binding site" evidence="1">
    <location>
        <position position="74"/>
    </location>
    <ligand>
        <name>Ca(2+)</name>
        <dbReference type="ChEBI" id="CHEBI:29108"/>
    </ligand>
</feature>
<feature type="glycosylation site" description="N-linked (GlcNAc...) asparagine" evidence="2">
    <location>
        <position position="109"/>
    </location>
</feature>
<feature type="disulfide bond" evidence="1">
    <location>
        <begin position="38"/>
        <end position="97"/>
    </location>
</feature>
<feature type="disulfide bond" evidence="1">
    <location>
        <begin position="52"/>
        <end position="145"/>
    </location>
</feature>
<feature type="disulfide bond" evidence="1">
    <location>
        <begin position="54"/>
        <end position="70"/>
    </location>
</feature>
<feature type="disulfide bond" evidence="1">
    <location>
        <begin position="69"/>
        <end position="127"/>
    </location>
</feature>
<feature type="disulfide bond" evidence="1">
    <location>
        <begin position="76"/>
        <end position="120"/>
    </location>
</feature>
<feature type="disulfide bond" evidence="1">
    <location>
        <begin position="86"/>
        <end position="113"/>
    </location>
</feature>
<feature type="disulfide bond" evidence="1">
    <location>
        <begin position="106"/>
        <end position="118"/>
    </location>
</feature>
<protein>
    <recommendedName>
        <fullName>Basic phospholipase A2</fullName>
        <shortName>svPLA2</shortName>
        <ecNumber>3.1.1.4</ecNumber>
    </recommendedName>
    <alternativeName>
        <fullName>Phosphatidylcholine 2-acylhydrolase</fullName>
    </alternativeName>
</protein>
<accession>Q8AXW7</accession>
<reference key="1">
    <citation type="journal article" date="1995" name="J. Toxicol. Toxin Rev.">
        <title>Reverse biology applied to Micrurus corallinus, a South American coral snake.</title>
        <authorList>
            <person name="Ho P.L."/>
            <person name="Soares M.B."/>
            <person name="Yamane T."/>
            <person name="Raw I.A."/>
        </authorList>
    </citation>
    <scope>NUCLEOTIDE SEQUENCE [MRNA]</scope>
    <source>
        <tissue>Venom gland</tissue>
    </source>
</reference>
<reference key="2">
    <citation type="journal article" date="2011" name="J. Proteomics">
        <title>Snake venomics and venom gland transcriptomic analysis of Brazilian coral snakes, Micrurus altirostris and M. corallinus.</title>
        <authorList>
            <person name="Correa-Netto C."/>
            <person name="Junqueira-de-Azevedo Ide L."/>
            <person name="Silva D.A."/>
            <person name="Ho P.L."/>
            <person name="Leitao-de-Araujo M."/>
            <person name="Alves M.L."/>
            <person name="Sanz L."/>
            <person name="Foguel D."/>
            <person name="Zingali R.B."/>
            <person name="Calvete J.J."/>
        </authorList>
    </citation>
    <scope>PROTEIN SEQUENCE OF 28-42</scope>
    <scope>IDENTIFICATION BY MASS SPECTROMETRY</scope>
    <source>
        <tissue>Venom</tissue>
    </source>
</reference>
<organism>
    <name type="scientific">Micrurus corallinus</name>
    <name type="common">Brazilian coral snake</name>
    <dbReference type="NCBI Taxonomy" id="54390"/>
    <lineage>
        <taxon>Eukaryota</taxon>
        <taxon>Metazoa</taxon>
        <taxon>Chordata</taxon>
        <taxon>Craniata</taxon>
        <taxon>Vertebrata</taxon>
        <taxon>Euteleostomi</taxon>
        <taxon>Lepidosauria</taxon>
        <taxon>Squamata</taxon>
        <taxon>Bifurcata</taxon>
        <taxon>Unidentata</taxon>
        <taxon>Episquamata</taxon>
        <taxon>Toxicofera</taxon>
        <taxon>Serpentes</taxon>
        <taxon>Colubroidea</taxon>
        <taxon>Elapidae</taxon>
        <taxon>Elapinae</taxon>
        <taxon>Micrurus</taxon>
    </lineage>
</organism>
<proteinExistence type="evidence at protein level"/>
<keyword id="KW-0106">Calcium</keyword>
<keyword id="KW-0903">Direct protein sequencing</keyword>
<keyword id="KW-1015">Disulfide bond</keyword>
<keyword id="KW-0325">Glycoprotein</keyword>
<keyword id="KW-0378">Hydrolase</keyword>
<keyword id="KW-0442">Lipid degradation</keyword>
<keyword id="KW-0443">Lipid metabolism</keyword>
<keyword id="KW-0479">Metal-binding</keyword>
<keyword id="KW-0964">Secreted</keyword>
<keyword id="KW-0732">Signal</keyword>
<keyword id="KW-0800">Toxin</keyword>
<comment type="function">
    <text evidence="1">PLA2 catalyzes the calcium-dependent hydrolysis of the 2-acyl groups in 3-sn-phosphoglycerides.</text>
</comment>
<comment type="catalytic activity">
    <reaction evidence="3 4">
        <text>a 1,2-diacyl-sn-glycero-3-phosphocholine + H2O = a 1-acyl-sn-glycero-3-phosphocholine + a fatty acid + H(+)</text>
        <dbReference type="Rhea" id="RHEA:15801"/>
        <dbReference type="ChEBI" id="CHEBI:15377"/>
        <dbReference type="ChEBI" id="CHEBI:15378"/>
        <dbReference type="ChEBI" id="CHEBI:28868"/>
        <dbReference type="ChEBI" id="CHEBI:57643"/>
        <dbReference type="ChEBI" id="CHEBI:58168"/>
        <dbReference type="EC" id="3.1.1.4"/>
    </reaction>
</comment>
<comment type="cofactor">
    <cofactor evidence="1">
        <name>Ca(2+)</name>
        <dbReference type="ChEBI" id="CHEBI:29108"/>
    </cofactor>
    <text evidence="1">Binds 1 Ca(2+) ion.</text>
</comment>
<comment type="subcellular location">
    <subcellularLocation>
        <location evidence="1">Secreted</location>
    </subcellularLocation>
</comment>
<comment type="tissue specificity">
    <text>Expressed by the venom gland.</text>
</comment>
<comment type="similarity">
    <text evidence="6">Belongs to the phospholipase A2 family. Group I subfamily. D49 sub-subfamily.</text>
</comment>
<name>PA2B_MICCO</name>
<dbReference type="EC" id="3.1.1.4"/>
<dbReference type="EMBL" id="AY157830">
    <property type="protein sequence ID" value="AAN60018.1"/>
    <property type="molecule type" value="mRNA"/>
</dbReference>
<dbReference type="SMR" id="Q8AXW7"/>
<dbReference type="GO" id="GO:0005576">
    <property type="term" value="C:extracellular region"/>
    <property type="evidence" value="ECO:0007669"/>
    <property type="project" value="UniProtKB-SubCell"/>
</dbReference>
<dbReference type="GO" id="GO:0005509">
    <property type="term" value="F:calcium ion binding"/>
    <property type="evidence" value="ECO:0007669"/>
    <property type="project" value="InterPro"/>
</dbReference>
<dbReference type="GO" id="GO:0047498">
    <property type="term" value="F:calcium-dependent phospholipase A2 activity"/>
    <property type="evidence" value="ECO:0007669"/>
    <property type="project" value="TreeGrafter"/>
</dbReference>
<dbReference type="GO" id="GO:0005543">
    <property type="term" value="F:phospholipid binding"/>
    <property type="evidence" value="ECO:0007669"/>
    <property type="project" value="TreeGrafter"/>
</dbReference>
<dbReference type="GO" id="GO:0090729">
    <property type="term" value="F:toxin activity"/>
    <property type="evidence" value="ECO:0007669"/>
    <property type="project" value="UniProtKB-KW"/>
</dbReference>
<dbReference type="GO" id="GO:0050482">
    <property type="term" value="P:arachidonate secretion"/>
    <property type="evidence" value="ECO:0007669"/>
    <property type="project" value="InterPro"/>
</dbReference>
<dbReference type="GO" id="GO:0016042">
    <property type="term" value="P:lipid catabolic process"/>
    <property type="evidence" value="ECO:0007669"/>
    <property type="project" value="UniProtKB-KW"/>
</dbReference>
<dbReference type="GO" id="GO:0006644">
    <property type="term" value="P:phospholipid metabolic process"/>
    <property type="evidence" value="ECO:0007669"/>
    <property type="project" value="InterPro"/>
</dbReference>
<dbReference type="CDD" id="cd00125">
    <property type="entry name" value="PLA2c"/>
    <property type="match status" value="1"/>
</dbReference>
<dbReference type="FunFam" id="1.20.90.10:FF:000007">
    <property type="entry name" value="Acidic phospholipase A2"/>
    <property type="match status" value="1"/>
</dbReference>
<dbReference type="Gene3D" id="1.20.90.10">
    <property type="entry name" value="Phospholipase A2 domain"/>
    <property type="match status" value="1"/>
</dbReference>
<dbReference type="InterPro" id="IPR001211">
    <property type="entry name" value="PLipase_A2"/>
</dbReference>
<dbReference type="InterPro" id="IPR033112">
    <property type="entry name" value="PLipase_A2_Asp_AS"/>
</dbReference>
<dbReference type="InterPro" id="IPR016090">
    <property type="entry name" value="PLipase_A2_dom"/>
</dbReference>
<dbReference type="InterPro" id="IPR036444">
    <property type="entry name" value="PLipase_A2_dom_sf"/>
</dbReference>
<dbReference type="InterPro" id="IPR033113">
    <property type="entry name" value="PLipase_A2_His_AS"/>
</dbReference>
<dbReference type="PANTHER" id="PTHR11716:SF94">
    <property type="entry name" value="PHOSPHOLIPASE A2"/>
    <property type="match status" value="1"/>
</dbReference>
<dbReference type="PANTHER" id="PTHR11716">
    <property type="entry name" value="PHOSPHOLIPASE A2 FAMILY MEMBER"/>
    <property type="match status" value="1"/>
</dbReference>
<dbReference type="Pfam" id="PF00068">
    <property type="entry name" value="Phospholip_A2_1"/>
    <property type="match status" value="1"/>
</dbReference>
<dbReference type="PRINTS" id="PR00389">
    <property type="entry name" value="PHPHLIPASEA2"/>
</dbReference>
<dbReference type="SMART" id="SM00085">
    <property type="entry name" value="PA2c"/>
    <property type="match status" value="1"/>
</dbReference>
<dbReference type="SUPFAM" id="SSF48619">
    <property type="entry name" value="Phospholipase A2, PLA2"/>
    <property type="match status" value="1"/>
</dbReference>
<dbReference type="PROSITE" id="PS00119">
    <property type="entry name" value="PA2_ASP"/>
    <property type="match status" value="1"/>
</dbReference>
<dbReference type="PROSITE" id="PS00118">
    <property type="entry name" value="PA2_HIS"/>
    <property type="match status" value="1"/>
</dbReference>
<sequence>MNPAHLLVLAAVCVSLLGASSVPPRPLNLINFQRMIQCTTRRSAWDFTNYGCYCGAGGSGTPVDELDRCCKVHDDCYGAAEKYHRCSPKLTLYTSTCSSQTGSVTCKDNGTKCKAFVCNCDRTAALCFGRAPYNKNNENINPNRCR</sequence>